<comment type="catalytic activity">
    <reaction evidence="1">
        <text>Hydrolysis of terminal non-reducing beta-D-galactose residues in beta-D-galactosides.</text>
        <dbReference type="EC" id="3.2.1.23"/>
    </reaction>
</comment>
<comment type="cofactor">
    <cofactor evidence="1">
        <name>Mg(2+)</name>
        <dbReference type="ChEBI" id="CHEBI:18420"/>
    </cofactor>
    <text evidence="1">Binds 2 magnesium ions per monomer.</text>
</comment>
<comment type="cofactor">
    <cofactor evidence="1">
        <name>Na(+)</name>
        <dbReference type="ChEBI" id="CHEBI:29101"/>
    </cofactor>
    <text evidence="1">Binds 1 sodium ion per monomer.</text>
</comment>
<comment type="subunit">
    <text evidence="1">Homotetramer.</text>
</comment>
<comment type="similarity">
    <text evidence="1">Belongs to the glycosyl hydrolase 2 family.</text>
</comment>
<gene>
    <name evidence="1" type="primary">lacZ</name>
    <name type="ordered locus">EcolC_3281</name>
</gene>
<evidence type="ECO:0000255" key="1">
    <source>
        <dbReference type="HAMAP-Rule" id="MF_01687"/>
    </source>
</evidence>
<organism>
    <name type="scientific">Escherichia coli (strain ATCC 8739 / DSM 1576 / NBRC 3972 / NCIMB 8545 / WDCM 00012 / Crooks)</name>
    <dbReference type="NCBI Taxonomy" id="481805"/>
    <lineage>
        <taxon>Bacteria</taxon>
        <taxon>Pseudomonadati</taxon>
        <taxon>Pseudomonadota</taxon>
        <taxon>Gammaproteobacteria</taxon>
        <taxon>Enterobacterales</taxon>
        <taxon>Enterobacteriaceae</taxon>
        <taxon>Escherichia</taxon>
    </lineage>
</organism>
<name>BGAL_ECOLC</name>
<feature type="chain" id="PRO_0000366989" description="Beta-galactosidase">
    <location>
        <begin position="1"/>
        <end position="1024"/>
    </location>
</feature>
<feature type="active site" description="Proton donor" evidence="1">
    <location>
        <position position="462"/>
    </location>
</feature>
<feature type="active site" description="Nucleophile" evidence="1">
    <location>
        <position position="538"/>
    </location>
</feature>
<feature type="binding site" evidence="1">
    <location>
        <position position="103"/>
    </location>
    <ligand>
        <name>substrate</name>
    </ligand>
</feature>
<feature type="binding site" evidence="1">
    <location>
        <position position="202"/>
    </location>
    <ligand>
        <name>Na(+)</name>
        <dbReference type="ChEBI" id="CHEBI:29101"/>
    </ligand>
</feature>
<feature type="binding site" evidence="1">
    <location>
        <position position="202"/>
    </location>
    <ligand>
        <name>substrate</name>
    </ligand>
</feature>
<feature type="binding site" evidence="1">
    <location>
        <position position="417"/>
    </location>
    <ligand>
        <name>Mg(2+)</name>
        <dbReference type="ChEBI" id="CHEBI:18420"/>
        <label>1</label>
    </ligand>
</feature>
<feature type="binding site" evidence="1">
    <location>
        <position position="419"/>
    </location>
    <ligand>
        <name>Mg(2+)</name>
        <dbReference type="ChEBI" id="CHEBI:18420"/>
        <label>1</label>
    </ligand>
</feature>
<feature type="binding site" evidence="1">
    <location>
        <position position="462"/>
    </location>
    <ligand>
        <name>Mg(2+)</name>
        <dbReference type="ChEBI" id="CHEBI:18420"/>
        <label>1</label>
    </ligand>
</feature>
<feature type="binding site" evidence="1">
    <location>
        <position position="462"/>
    </location>
    <ligand>
        <name>substrate</name>
    </ligand>
</feature>
<feature type="binding site" evidence="1">
    <location>
        <begin position="538"/>
        <end position="541"/>
    </location>
    <ligand>
        <name>substrate</name>
    </ligand>
</feature>
<feature type="binding site" evidence="1">
    <location>
        <position position="598"/>
    </location>
    <ligand>
        <name>Mg(2+)</name>
        <dbReference type="ChEBI" id="CHEBI:18420"/>
        <label>2</label>
    </ligand>
</feature>
<feature type="binding site" evidence="1">
    <location>
        <position position="602"/>
    </location>
    <ligand>
        <name>Na(+)</name>
        <dbReference type="ChEBI" id="CHEBI:29101"/>
    </ligand>
</feature>
<feature type="binding site" evidence="1">
    <location>
        <position position="605"/>
    </location>
    <ligand>
        <name>Na(+)</name>
        <dbReference type="ChEBI" id="CHEBI:29101"/>
    </ligand>
</feature>
<feature type="binding site" evidence="1">
    <location>
        <position position="605"/>
    </location>
    <ligand>
        <name>substrate</name>
    </ligand>
</feature>
<feature type="binding site" evidence="1">
    <location>
        <position position="1000"/>
    </location>
    <ligand>
        <name>substrate</name>
    </ligand>
</feature>
<feature type="site" description="Transition state stabilizer" evidence="1">
    <location>
        <position position="358"/>
    </location>
</feature>
<feature type="site" description="Transition state stabilizer" evidence="1">
    <location>
        <position position="392"/>
    </location>
</feature>
<proteinExistence type="inferred from homology"/>
<dbReference type="EC" id="3.2.1.23" evidence="1"/>
<dbReference type="EMBL" id="CP000946">
    <property type="protein sequence ID" value="ACA78903.1"/>
    <property type="molecule type" value="Genomic_DNA"/>
</dbReference>
<dbReference type="RefSeq" id="WP_000177932.1">
    <property type="nucleotide sequence ID" value="NZ_MTFT01000010.1"/>
</dbReference>
<dbReference type="SMR" id="B1J0T5"/>
<dbReference type="CAZy" id="GH2">
    <property type="family name" value="Glycoside Hydrolase Family 2"/>
</dbReference>
<dbReference type="KEGG" id="ecl:EcolC_3281"/>
<dbReference type="HOGENOM" id="CLU_002346_0_2_6"/>
<dbReference type="GO" id="GO:0009341">
    <property type="term" value="C:beta-galactosidase complex"/>
    <property type="evidence" value="ECO:0007669"/>
    <property type="project" value="InterPro"/>
</dbReference>
<dbReference type="GO" id="GO:0004565">
    <property type="term" value="F:beta-galactosidase activity"/>
    <property type="evidence" value="ECO:0007669"/>
    <property type="project" value="UniProtKB-EC"/>
</dbReference>
<dbReference type="GO" id="GO:0030246">
    <property type="term" value="F:carbohydrate binding"/>
    <property type="evidence" value="ECO:0007669"/>
    <property type="project" value="InterPro"/>
</dbReference>
<dbReference type="GO" id="GO:0000287">
    <property type="term" value="F:magnesium ion binding"/>
    <property type="evidence" value="ECO:0007669"/>
    <property type="project" value="UniProtKB-UniRule"/>
</dbReference>
<dbReference type="GO" id="GO:0005990">
    <property type="term" value="P:lactose catabolic process"/>
    <property type="evidence" value="ECO:0007669"/>
    <property type="project" value="TreeGrafter"/>
</dbReference>
<dbReference type="FunFam" id="2.60.120.260:FF:000058">
    <property type="entry name" value="Beta-galactosidase"/>
    <property type="match status" value="1"/>
</dbReference>
<dbReference type="FunFam" id="2.60.40.10:FF:000680">
    <property type="entry name" value="Beta-galactosidase"/>
    <property type="match status" value="1"/>
</dbReference>
<dbReference type="FunFam" id="2.60.40.10:FF:000850">
    <property type="entry name" value="Beta-galactosidase"/>
    <property type="match status" value="1"/>
</dbReference>
<dbReference type="FunFam" id="2.70.98.10:FF:000006">
    <property type="entry name" value="Beta-galactosidase"/>
    <property type="match status" value="1"/>
</dbReference>
<dbReference type="FunFam" id="3.20.20.80:FF:000018">
    <property type="entry name" value="Beta-galactosidase"/>
    <property type="match status" value="1"/>
</dbReference>
<dbReference type="Gene3D" id="2.70.98.10">
    <property type="match status" value="1"/>
</dbReference>
<dbReference type="Gene3D" id="2.60.120.260">
    <property type="entry name" value="Galactose-binding domain-like"/>
    <property type="match status" value="1"/>
</dbReference>
<dbReference type="Gene3D" id="3.20.20.80">
    <property type="entry name" value="Glycosidases"/>
    <property type="match status" value="1"/>
</dbReference>
<dbReference type="Gene3D" id="2.60.40.10">
    <property type="entry name" value="Immunoglobulins"/>
    <property type="match status" value="2"/>
</dbReference>
<dbReference type="HAMAP" id="MF_01687">
    <property type="entry name" value="Beta_gal"/>
    <property type="match status" value="1"/>
</dbReference>
<dbReference type="InterPro" id="IPR004199">
    <property type="entry name" value="B-gal_small/dom_5"/>
</dbReference>
<dbReference type="InterPro" id="IPR050347">
    <property type="entry name" value="Bact_Beta-galactosidase"/>
</dbReference>
<dbReference type="InterPro" id="IPR036156">
    <property type="entry name" value="Beta-gal/glucu_dom_sf"/>
</dbReference>
<dbReference type="InterPro" id="IPR011013">
    <property type="entry name" value="Gal_mutarotase_sf_dom"/>
</dbReference>
<dbReference type="InterPro" id="IPR008979">
    <property type="entry name" value="Galactose-bd-like_sf"/>
</dbReference>
<dbReference type="InterPro" id="IPR014718">
    <property type="entry name" value="GH-type_carb-bd"/>
</dbReference>
<dbReference type="InterPro" id="IPR006101">
    <property type="entry name" value="Glyco_hydro_2"/>
</dbReference>
<dbReference type="InterPro" id="IPR023232">
    <property type="entry name" value="Glyco_hydro_2_AS"/>
</dbReference>
<dbReference type="InterPro" id="IPR023933">
    <property type="entry name" value="Glyco_hydro_2_beta_Galsidase"/>
</dbReference>
<dbReference type="InterPro" id="IPR006103">
    <property type="entry name" value="Glyco_hydro_2_cat"/>
</dbReference>
<dbReference type="InterPro" id="IPR023230">
    <property type="entry name" value="Glyco_hydro_2_CS"/>
</dbReference>
<dbReference type="InterPro" id="IPR006102">
    <property type="entry name" value="Glyco_hydro_2_Ig-like"/>
</dbReference>
<dbReference type="InterPro" id="IPR006104">
    <property type="entry name" value="Glyco_hydro_2_N"/>
</dbReference>
<dbReference type="InterPro" id="IPR017853">
    <property type="entry name" value="Glycoside_hydrolase_SF"/>
</dbReference>
<dbReference type="InterPro" id="IPR013783">
    <property type="entry name" value="Ig-like_fold"/>
</dbReference>
<dbReference type="InterPro" id="IPR032312">
    <property type="entry name" value="LacZ_4"/>
</dbReference>
<dbReference type="NCBIfam" id="NF007074">
    <property type="entry name" value="PRK09525.1"/>
    <property type="match status" value="1"/>
</dbReference>
<dbReference type="PANTHER" id="PTHR46323">
    <property type="entry name" value="BETA-GALACTOSIDASE"/>
    <property type="match status" value="1"/>
</dbReference>
<dbReference type="PANTHER" id="PTHR46323:SF2">
    <property type="entry name" value="BETA-GALACTOSIDASE"/>
    <property type="match status" value="1"/>
</dbReference>
<dbReference type="Pfam" id="PF02929">
    <property type="entry name" value="Bgal_small_N"/>
    <property type="match status" value="1"/>
</dbReference>
<dbReference type="Pfam" id="PF00703">
    <property type="entry name" value="Glyco_hydro_2"/>
    <property type="match status" value="1"/>
</dbReference>
<dbReference type="Pfam" id="PF02836">
    <property type="entry name" value="Glyco_hydro_2_C"/>
    <property type="match status" value="1"/>
</dbReference>
<dbReference type="Pfam" id="PF02837">
    <property type="entry name" value="Glyco_hydro_2_N"/>
    <property type="match status" value="1"/>
</dbReference>
<dbReference type="Pfam" id="PF16353">
    <property type="entry name" value="LacZ_4"/>
    <property type="match status" value="1"/>
</dbReference>
<dbReference type="PRINTS" id="PR00132">
    <property type="entry name" value="GLHYDRLASE2"/>
</dbReference>
<dbReference type="SMART" id="SM01038">
    <property type="entry name" value="Bgal_small_N"/>
    <property type="match status" value="1"/>
</dbReference>
<dbReference type="SUPFAM" id="SSF51445">
    <property type="entry name" value="(Trans)glycosidases"/>
    <property type="match status" value="1"/>
</dbReference>
<dbReference type="SUPFAM" id="SSF49303">
    <property type="entry name" value="beta-Galactosidase/glucuronidase domain"/>
    <property type="match status" value="2"/>
</dbReference>
<dbReference type="SUPFAM" id="SSF74650">
    <property type="entry name" value="Galactose mutarotase-like"/>
    <property type="match status" value="1"/>
</dbReference>
<dbReference type="SUPFAM" id="SSF49785">
    <property type="entry name" value="Galactose-binding domain-like"/>
    <property type="match status" value="1"/>
</dbReference>
<dbReference type="PROSITE" id="PS00719">
    <property type="entry name" value="GLYCOSYL_HYDROL_F2_1"/>
    <property type="match status" value="1"/>
</dbReference>
<dbReference type="PROSITE" id="PS00608">
    <property type="entry name" value="GLYCOSYL_HYDROL_F2_2"/>
    <property type="match status" value="1"/>
</dbReference>
<accession>B1J0T5</accession>
<sequence>MTMITDSLAVVLQRRDWENPGVTQLNRLAAHPPFASWRNSEEARTDRPSQQLRSLNGEWRFAWFPAPEAVPESWLECDLPEADTVVVPSNWQMHGYDAPIYTNVTYPITVNPPFVPTENPTSCYSLTFNVDESWLQEGQTRIIFDGVNSAFHLWCNGRWVGYGQDSRLPSEFDLSAFLRAGKNRLAVMVLRWSDGSYLEDQDMWRMSGIFRDVSLLHKPTTQISDFHVATRFNDDFSRAVLEAEVQMCGELRDYLRVTVSLWQGETQVASGTAPFGGEIIDERGGYADRVTLRLNVENPKLWSAEIPNLYRAVVELHTADGTLIEAEACDVGFREVRIENGLLLLNGKPLLIRGVNRHEHHPLHGQVMDEQTMVQDILLMKQNNFNAVRCSHYPNHPLWYTLCDRYGLYVVDEANIETHGMVPMNRLTDDPRWLPAMSERVTRMVQRDRNHPSVIIWSLGNESGHGANHDALYRWIKSVDPSRPVQYEGGGADTTATDIICPMYARVDEDQPFPAVPKWSIKKWLSLPGETRPLILCEYAHAMGNSLGGFAKYWQAFRQYPRLQGGFVWDWVDQSLIKYDENGNPWSAYGGDFGDTPNDRQFCMNGLVFADRTPHPALTEAKHQQQFFQFRLSGQTIEVTSEYLFRHSDNELLHWMVALDGKPLASGEVPLDVAPQGKQLIELPELPQPESAGQLWLTVRVVQPNATAWSEAGHISAWQQWRLAENLSVTLPAASHAIPHLTTSEMDFCIELGNKRWQFNRQSGFLSQMWIGDKKQLLTPLRDQFTRAPLDNDIGVSEATRIDPNAWVERWKAAGHYQAEAALLQCTADTLADAVLITTAHAWQHQGKTLFISRKTYRIDGSGQMAITVDVEVASDTPHPARIGLNCQLAQVAERVNWLGLGPQENYPDRLTAACFDRWDLPLSDMYTPYVFPSENGLRCGTRELNYGPHQWRGDFQFNISRYSQQQLMETSHRHLLHAEEGTWLNIDGFHMGIGGDDSWSPSVSAEFQLSAGRYHYQLVWCQK</sequence>
<protein>
    <recommendedName>
        <fullName evidence="1">Beta-galactosidase</fullName>
        <shortName evidence="1">Beta-gal</shortName>
        <ecNumber evidence="1">3.2.1.23</ecNumber>
    </recommendedName>
    <alternativeName>
        <fullName evidence="1">Lactase</fullName>
    </alternativeName>
</protein>
<reference key="1">
    <citation type="submission" date="2008-02" db="EMBL/GenBank/DDBJ databases">
        <title>Complete sequence of Escherichia coli C str. ATCC 8739.</title>
        <authorList>
            <person name="Copeland A."/>
            <person name="Lucas S."/>
            <person name="Lapidus A."/>
            <person name="Glavina del Rio T."/>
            <person name="Dalin E."/>
            <person name="Tice H."/>
            <person name="Bruce D."/>
            <person name="Goodwin L."/>
            <person name="Pitluck S."/>
            <person name="Kiss H."/>
            <person name="Brettin T."/>
            <person name="Detter J.C."/>
            <person name="Han C."/>
            <person name="Kuske C.R."/>
            <person name="Schmutz J."/>
            <person name="Larimer F."/>
            <person name="Land M."/>
            <person name="Hauser L."/>
            <person name="Kyrpides N."/>
            <person name="Mikhailova N."/>
            <person name="Ingram L."/>
            <person name="Richardson P."/>
        </authorList>
    </citation>
    <scope>NUCLEOTIDE SEQUENCE [LARGE SCALE GENOMIC DNA]</scope>
    <source>
        <strain>ATCC 8739 / DSM 1576 / NBRC 3972 / NCIMB 8545 / WDCM 00012 / Crooks</strain>
    </source>
</reference>
<keyword id="KW-0326">Glycosidase</keyword>
<keyword id="KW-0378">Hydrolase</keyword>
<keyword id="KW-0460">Magnesium</keyword>
<keyword id="KW-0479">Metal-binding</keyword>
<keyword id="KW-0915">Sodium</keyword>